<evidence type="ECO:0000255" key="1">
    <source>
        <dbReference type="HAMAP-Rule" id="MF_01398"/>
    </source>
</evidence>
<comment type="function">
    <text evidence="1">F(1)F(0) ATP synthase produces ATP from ADP in the presence of a proton or sodium gradient. F-type ATPases consist of two structural domains, F(1) containing the extramembraneous catalytic core and F(0) containing the membrane proton channel, linked together by a central stalk and a peripheral stalk. During catalysis, ATP synthesis in the catalytic domain of F(1) is coupled via a rotary mechanism of the central stalk subunits to proton translocation.</text>
</comment>
<comment type="function">
    <text evidence="1">Component of the F(0) channel, it forms part of the peripheral stalk, linking F(1) to F(0).</text>
</comment>
<comment type="subunit">
    <text evidence="1">F-type ATPases have 2 components, F(1) - the catalytic core - and F(0) - the membrane proton channel. F(1) has five subunits: alpha(3), beta(3), gamma(1), delta(1), epsilon(1). F(0) has three main subunits: a(1), b(2) and c(10-14). The alpha and beta chains form an alternating ring which encloses part of the gamma chain. F(1) is attached to F(0) by a central stalk formed by the gamma and epsilon chains, while a peripheral stalk is formed by the delta and b chains.</text>
</comment>
<comment type="subcellular location">
    <subcellularLocation>
        <location evidence="1">Cell inner membrane</location>
        <topology evidence="1">Single-pass membrane protein</topology>
    </subcellularLocation>
</comment>
<comment type="similarity">
    <text evidence="1">Belongs to the ATPase B chain family.</text>
</comment>
<feature type="chain" id="PRO_0000368842" description="ATP synthase subunit b">
    <location>
        <begin position="1"/>
        <end position="162"/>
    </location>
</feature>
<feature type="transmembrane region" description="Helical" evidence="1">
    <location>
        <begin position="8"/>
        <end position="28"/>
    </location>
</feature>
<reference key="1">
    <citation type="submission" date="2007-08" db="EMBL/GenBank/DDBJ databases">
        <title>Complete sequence of Thermotoga lettingae TMO.</title>
        <authorList>
            <consortium name="US DOE Joint Genome Institute"/>
            <person name="Copeland A."/>
            <person name="Lucas S."/>
            <person name="Lapidus A."/>
            <person name="Barry K."/>
            <person name="Glavina del Rio T."/>
            <person name="Dalin E."/>
            <person name="Tice H."/>
            <person name="Pitluck S."/>
            <person name="Foster B."/>
            <person name="Bruce D."/>
            <person name="Schmutz J."/>
            <person name="Larimer F."/>
            <person name="Land M."/>
            <person name="Hauser L."/>
            <person name="Kyrpides N."/>
            <person name="Mikhailova N."/>
            <person name="Nelson K."/>
            <person name="Gogarten J.P."/>
            <person name="Noll K."/>
            <person name="Richardson P."/>
        </authorList>
    </citation>
    <scope>NUCLEOTIDE SEQUENCE [LARGE SCALE GENOMIC DNA]</scope>
    <source>
        <strain>ATCC BAA-301 / DSM 14385 / NBRC 107922 / TMO</strain>
    </source>
</reference>
<proteinExistence type="inferred from homology"/>
<gene>
    <name evidence="1" type="primary">atpF</name>
    <name type="ordered locus">Tlet_0162</name>
</gene>
<name>ATPF_PSELT</name>
<keyword id="KW-0066">ATP synthesis</keyword>
<keyword id="KW-0997">Cell inner membrane</keyword>
<keyword id="KW-1003">Cell membrane</keyword>
<keyword id="KW-0138">CF(0)</keyword>
<keyword id="KW-0375">Hydrogen ion transport</keyword>
<keyword id="KW-0406">Ion transport</keyword>
<keyword id="KW-0472">Membrane</keyword>
<keyword id="KW-1185">Reference proteome</keyword>
<keyword id="KW-0812">Transmembrane</keyword>
<keyword id="KW-1133">Transmembrane helix</keyword>
<keyword id="KW-0813">Transport</keyword>
<sequence>MGFVELNLTGIIQLLNFLILLFVLYKFLYKPFLQIADKRREKIQSDLASAEKELKEAQEMKKQAHDALESARKSADGIISEARQKSEEIINQAKVKAREEAEKVLNSARNEIEREKKQALQEIEKRAGEIAVTLALKILQGVLDEKAKREYLINILNKEKEK</sequence>
<protein>
    <recommendedName>
        <fullName evidence="1">ATP synthase subunit b</fullName>
    </recommendedName>
    <alternativeName>
        <fullName evidence="1">ATP synthase F(0) sector subunit b</fullName>
    </alternativeName>
    <alternativeName>
        <fullName evidence="1">ATPase subunit I</fullName>
    </alternativeName>
    <alternativeName>
        <fullName evidence="1">F-type ATPase subunit b</fullName>
        <shortName evidence="1">F-ATPase subunit b</shortName>
    </alternativeName>
</protein>
<dbReference type="EMBL" id="CP000812">
    <property type="protein sequence ID" value="ABV32732.1"/>
    <property type="molecule type" value="Genomic_DNA"/>
</dbReference>
<dbReference type="RefSeq" id="WP_012002213.1">
    <property type="nucleotide sequence ID" value="NZ_BSDV01000001.1"/>
</dbReference>
<dbReference type="SMR" id="A8F3J8"/>
<dbReference type="STRING" id="416591.Tlet_0162"/>
<dbReference type="KEGG" id="tle:Tlet_0162"/>
<dbReference type="eggNOG" id="COG0711">
    <property type="taxonomic scope" value="Bacteria"/>
</dbReference>
<dbReference type="HOGENOM" id="CLU_079215_4_5_0"/>
<dbReference type="OrthoDB" id="47427at2"/>
<dbReference type="Proteomes" id="UP000002016">
    <property type="component" value="Chromosome"/>
</dbReference>
<dbReference type="GO" id="GO:0005886">
    <property type="term" value="C:plasma membrane"/>
    <property type="evidence" value="ECO:0007669"/>
    <property type="project" value="UniProtKB-SubCell"/>
</dbReference>
<dbReference type="GO" id="GO:0045259">
    <property type="term" value="C:proton-transporting ATP synthase complex"/>
    <property type="evidence" value="ECO:0007669"/>
    <property type="project" value="UniProtKB-KW"/>
</dbReference>
<dbReference type="GO" id="GO:0046933">
    <property type="term" value="F:proton-transporting ATP synthase activity, rotational mechanism"/>
    <property type="evidence" value="ECO:0007669"/>
    <property type="project" value="UniProtKB-UniRule"/>
</dbReference>
<dbReference type="GO" id="GO:0046961">
    <property type="term" value="F:proton-transporting ATPase activity, rotational mechanism"/>
    <property type="evidence" value="ECO:0007669"/>
    <property type="project" value="TreeGrafter"/>
</dbReference>
<dbReference type="CDD" id="cd06503">
    <property type="entry name" value="ATP-synt_Fo_b"/>
    <property type="match status" value="1"/>
</dbReference>
<dbReference type="Gene3D" id="1.20.5.620">
    <property type="entry name" value="F1F0 ATP synthase subunit B, membrane domain"/>
    <property type="match status" value="1"/>
</dbReference>
<dbReference type="HAMAP" id="MF_01398">
    <property type="entry name" value="ATP_synth_b_bprime"/>
    <property type="match status" value="1"/>
</dbReference>
<dbReference type="InterPro" id="IPR028987">
    <property type="entry name" value="ATP_synth_B-like_membr_sf"/>
</dbReference>
<dbReference type="InterPro" id="IPR002146">
    <property type="entry name" value="ATP_synth_b/b'su_bac/chlpt"/>
</dbReference>
<dbReference type="InterPro" id="IPR005864">
    <property type="entry name" value="ATP_synth_F0_bsu_bac"/>
</dbReference>
<dbReference type="InterPro" id="IPR050059">
    <property type="entry name" value="ATP_synthase_B_chain"/>
</dbReference>
<dbReference type="NCBIfam" id="TIGR01144">
    <property type="entry name" value="ATP_synt_b"/>
    <property type="match status" value="1"/>
</dbReference>
<dbReference type="PANTHER" id="PTHR33445:SF1">
    <property type="entry name" value="ATP SYNTHASE SUBUNIT B"/>
    <property type="match status" value="1"/>
</dbReference>
<dbReference type="PANTHER" id="PTHR33445">
    <property type="entry name" value="ATP SYNTHASE SUBUNIT B', CHLOROPLASTIC"/>
    <property type="match status" value="1"/>
</dbReference>
<dbReference type="Pfam" id="PF00430">
    <property type="entry name" value="ATP-synt_B"/>
    <property type="match status" value="1"/>
</dbReference>
<dbReference type="SUPFAM" id="SSF81573">
    <property type="entry name" value="F1F0 ATP synthase subunit B, membrane domain"/>
    <property type="match status" value="1"/>
</dbReference>
<organism>
    <name type="scientific">Pseudothermotoga lettingae (strain ATCC BAA-301 / DSM 14385 / NBRC 107922 / TMO)</name>
    <name type="common">Thermotoga lettingae</name>
    <dbReference type="NCBI Taxonomy" id="416591"/>
    <lineage>
        <taxon>Bacteria</taxon>
        <taxon>Thermotogati</taxon>
        <taxon>Thermotogota</taxon>
        <taxon>Thermotogae</taxon>
        <taxon>Thermotogales</taxon>
        <taxon>Thermotogaceae</taxon>
        <taxon>Pseudothermotoga</taxon>
    </lineage>
</organism>
<accession>A8F3J8</accession>